<comment type="function">
    <text evidence="1">Catalyzes the sequential NAD-dependent oxidations of L-histidinol to L-histidinaldehyde and then to L-histidine.</text>
</comment>
<comment type="catalytic activity">
    <reaction evidence="1">
        <text>L-histidinol + 2 NAD(+) + H2O = L-histidine + 2 NADH + 3 H(+)</text>
        <dbReference type="Rhea" id="RHEA:20641"/>
        <dbReference type="ChEBI" id="CHEBI:15377"/>
        <dbReference type="ChEBI" id="CHEBI:15378"/>
        <dbReference type="ChEBI" id="CHEBI:57540"/>
        <dbReference type="ChEBI" id="CHEBI:57595"/>
        <dbReference type="ChEBI" id="CHEBI:57699"/>
        <dbReference type="ChEBI" id="CHEBI:57945"/>
        <dbReference type="EC" id="1.1.1.23"/>
    </reaction>
</comment>
<comment type="cofactor">
    <cofactor evidence="1">
        <name>Zn(2+)</name>
        <dbReference type="ChEBI" id="CHEBI:29105"/>
    </cofactor>
    <text evidence="1">Binds 1 zinc ion per subunit.</text>
</comment>
<comment type="pathway">
    <text evidence="1">Amino-acid biosynthesis; L-histidine biosynthesis; L-histidine from 5-phospho-alpha-D-ribose 1-diphosphate: step 9/9.</text>
</comment>
<comment type="similarity">
    <text evidence="1">Belongs to the histidinol dehydrogenase family.</text>
</comment>
<evidence type="ECO:0000255" key="1">
    <source>
        <dbReference type="HAMAP-Rule" id="MF_01024"/>
    </source>
</evidence>
<evidence type="ECO:0000256" key="2">
    <source>
        <dbReference type="SAM" id="MobiDB-lite"/>
    </source>
</evidence>
<organism>
    <name type="scientific">Corynebacterium efficiens (strain DSM 44549 / YS-314 / AJ 12310 / JCM 11189 / NBRC 100395)</name>
    <dbReference type="NCBI Taxonomy" id="196164"/>
    <lineage>
        <taxon>Bacteria</taxon>
        <taxon>Bacillati</taxon>
        <taxon>Actinomycetota</taxon>
        <taxon>Actinomycetes</taxon>
        <taxon>Mycobacteriales</taxon>
        <taxon>Corynebacteriaceae</taxon>
        <taxon>Corynebacterium</taxon>
    </lineage>
</organism>
<accession>Q8FNZ0</accession>
<protein>
    <recommendedName>
        <fullName evidence="1">Histidinol dehydrogenase</fullName>
        <shortName evidence="1">HDH</shortName>
        <ecNumber evidence="1">1.1.1.23</ecNumber>
    </recommendedName>
</protein>
<reference key="1">
    <citation type="journal article" date="2003" name="Genome Res.">
        <title>Comparative complete genome sequence analysis of the amino acid replacements responsible for the thermostability of Corynebacterium efficiens.</title>
        <authorList>
            <person name="Nishio Y."/>
            <person name="Nakamura Y."/>
            <person name="Kawarabayasi Y."/>
            <person name="Usuda Y."/>
            <person name="Kimura E."/>
            <person name="Sugimoto S."/>
            <person name="Matsui K."/>
            <person name="Yamagishi A."/>
            <person name="Kikuchi H."/>
            <person name="Ikeo K."/>
            <person name="Gojobori T."/>
        </authorList>
    </citation>
    <scope>NUCLEOTIDE SEQUENCE [LARGE SCALE GENOMIC DNA]</scope>
    <source>
        <strain>DSM 44549 / YS-314 / AJ 12310 / JCM 11189 / NBRC 100395</strain>
    </source>
</reference>
<proteinExistence type="inferred from homology"/>
<name>HISX_COREF</name>
<gene>
    <name evidence="1" type="primary">hisD</name>
    <name type="ordered locus">CE2003</name>
</gene>
<sequence>MLNVTDLRGHTPSKSDIRRALPRGGTDVVSVLPIVEPVVDDVQNRGAEAALDYGEKFDHIRPASVRVPAEVLKAAEDTLDPRVREAIEESIRRVRKVHADQKPREHTTELAPGGTVTERFLPIDRVGLYVPGGNAVYPSSVIMNAVPAQEAGVGTLVVASPPQADHGGWPHPTILAACSILGVDEVWAVGGAQAVALLAFGDDSADLEPVDIITGPGNIFVTAAKRLVRGVVGTDSEAGPTEIAILADDTANPVNVAYDLISQAEHDVMAASVLITDSEQLARDVNREIEARYAITRNADRVAEALRGKQSGIVLVDDIEVGIAVADQYAAEHLEVHTANAREVSERISNAGAIFVGDFSPVPLGDYSAGSNHVLPTSGTARFSAGLSTHTFLRPVNLIEYDEAALKDISEVVINFADAEDLPAHGEAIRARFETLPTTTADTTDTPDATA</sequence>
<keyword id="KW-0028">Amino-acid biosynthesis</keyword>
<keyword id="KW-0368">Histidine biosynthesis</keyword>
<keyword id="KW-0479">Metal-binding</keyword>
<keyword id="KW-0520">NAD</keyword>
<keyword id="KW-0560">Oxidoreductase</keyword>
<keyword id="KW-1185">Reference proteome</keyword>
<keyword id="KW-0862">Zinc</keyword>
<dbReference type="EC" id="1.1.1.23" evidence="1"/>
<dbReference type="EMBL" id="BA000035">
    <property type="protein sequence ID" value="BAC18813.1"/>
    <property type="molecule type" value="Genomic_DNA"/>
</dbReference>
<dbReference type="RefSeq" id="WP_006768001.1">
    <property type="nucleotide sequence ID" value="NC_004369.1"/>
</dbReference>
<dbReference type="SMR" id="Q8FNZ0"/>
<dbReference type="STRING" id="196164.gene:10742431"/>
<dbReference type="KEGG" id="cef:CE2003"/>
<dbReference type="eggNOG" id="COG0141">
    <property type="taxonomic scope" value="Bacteria"/>
</dbReference>
<dbReference type="HOGENOM" id="CLU_006732_3_1_11"/>
<dbReference type="OrthoDB" id="9805269at2"/>
<dbReference type="UniPathway" id="UPA00031">
    <property type="reaction ID" value="UER00014"/>
</dbReference>
<dbReference type="Proteomes" id="UP000001409">
    <property type="component" value="Chromosome"/>
</dbReference>
<dbReference type="GO" id="GO:0005829">
    <property type="term" value="C:cytosol"/>
    <property type="evidence" value="ECO:0007669"/>
    <property type="project" value="TreeGrafter"/>
</dbReference>
<dbReference type="GO" id="GO:0004399">
    <property type="term" value="F:histidinol dehydrogenase activity"/>
    <property type="evidence" value="ECO:0007669"/>
    <property type="project" value="UniProtKB-UniRule"/>
</dbReference>
<dbReference type="GO" id="GO:0051287">
    <property type="term" value="F:NAD binding"/>
    <property type="evidence" value="ECO:0007669"/>
    <property type="project" value="InterPro"/>
</dbReference>
<dbReference type="GO" id="GO:0008270">
    <property type="term" value="F:zinc ion binding"/>
    <property type="evidence" value="ECO:0007669"/>
    <property type="project" value="UniProtKB-UniRule"/>
</dbReference>
<dbReference type="GO" id="GO:0000105">
    <property type="term" value="P:L-histidine biosynthetic process"/>
    <property type="evidence" value="ECO:0007669"/>
    <property type="project" value="UniProtKB-UniRule"/>
</dbReference>
<dbReference type="CDD" id="cd06572">
    <property type="entry name" value="Histidinol_dh"/>
    <property type="match status" value="1"/>
</dbReference>
<dbReference type="FunFam" id="3.40.50.1980:FF:000001">
    <property type="entry name" value="Histidinol dehydrogenase"/>
    <property type="match status" value="1"/>
</dbReference>
<dbReference type="Gene3D" id="1.20.5.1300">
    <property type="match status" value="1"/>
</dbReference>
<dbReference type="Gene3D" id="3.40.50.1980">
    <property type="entry name" value="Nitrogenase molybdenum iron protein domain"/>
    <property type="match status" value="2"/>
</dbReference>
<dbReference type="HAMAP" id="MF_01024">
    <property type="entry name" value="HisD"/>
    <property type="match status" value="1"/>
</dbReference>
<dbReference type="InterPro" id="IPR016161">
    <property type="entry name" value="Ald_DH/histidinol_DH"/>
</dbReference>
<dbReference type="InterPro" id="IPR001692">
    <property type="entry name" value="Histidinol_DH_CS"/>
</dbReference>
<dbReference type="InterPro" id="IPR022695">
    <property type="entry name" value="Histidinol_DH_monofunct"/>
</dbReference>
<dbReference type="InterPro" id="IPR012131">
    <property type="entry name" value="Hstdl_DH"/>
</dbReference>
<dbReference type="NCBIfam" id="TIGR00069">
    <property type="entry name" value="hisD"/>
    <property type="match status" value="1"/>
</dbReference>
<dbReference type="PANTHER" id="PTHR21256:SF2">
    <property type="entry name" value="HISTIDINE BIOSYNTHESIS TRIFUNCTIONAL PROTEIN"/>
    <property type="match status" value="1"/>
</dbReference>
<dbReference type="PANTHER" id="PTHR21256">
    <property type="entry name" value="HISTIDINOL DEHYDROGENASE HDH"/>
    <property type="match status" value="1"/>
</dbReference>
<dbReference type="Pfam" id="PF00815">
    <property type="entry name" value="Histidinol_dh"/>
    <property type="match status" value="1"/>
</dbReference>
<dbReference type="PIRSF" id="PIRSF000099">
    <property type="entry name" value="Histidinol_dh"/>
    <property type="match status" value="1"/>
</dbReference>
<dbReference type="PRINTS" id="PR00083">
    <property type="entry name" value="HOLDHDRGNASE"/>
</dbReference>
<dbReference type="SUPFAM" id="SSF53720">
    <property type="entry name" value="ALDH-like"/>
    <property type="match status" value="1"/>
</dbReference>
<dbReference type="PROSITE" id="PS00611">
    <property type="entry name" value="HISOL_DEHYDROGENASE"/>
    <property type="match status" value="1"/>
</dbReference>
<feature type="chain" id="PRO_0000135760" description="Histidinol dehydrogenase">
    <location>
        <begin position="1"/>
        <end position="451"/>
    </location>
</feature>
<feature type="region of interest" description="Disordered" evidence="2">
    <location>
        <begin position="1"/>
        <end position="20"/>
    </location>
</feature>
<feature type="compositionally biased region" description="Basic and acidic residues" evidence="2">
    <location>
        <begin position="7"/>
        <end position="19"/>
    </location>
</feature>
<feature type="active site" description="Proton acceptor" evidence="1">
    <location>
        <position position="332"/>
    </location>
</feature>
<feature type="active site" description="Proton acceptor" evidence="1">
    <location>
        <position position="333"/>
    </location>
</feature>
<feature type="binding site" evidence="1">
    <location>
        <position position="129"/>
    </location>
    <ligand>
        <name>NAD(+)</name>
        <dbReference type="ChEBI" id="CHEBI:57540"/>
    </ligand>
</feature>
<feature type="binding site" evidence="1">
    <location>
        <position position="193"/>
    </location>
    <ligand>
        <name>NAD(+)</name>
        <dbReference type="ChEBI" id="CHEBI:57540"/>
    </ligand>
</feature>
<feature type="binding site" evidence="1">
    <location>
        <position position="218"/>
    </location>
    <ligand>
        <name>NAD(+)</name>
        <dbReference type="ChEBI" id="CHEBI:57540"/>
    </ligand>
</feature>
<feature type="binding site" evidence="1">
    <location>
        <position position="241"/>
    </location>
    <ligand>
        <name>substrate</name>
    </ligand>
</feature>
<feature type="binding site" evidence="1">
    <location>
        <position position="263"/>
    </location>
    <ligand>
        <name>substrate</name>
    </ligand>
</feature>
<feature type="binding site" evidence="1">
    <location>
        <position position="263"/>
    </location>
    <ligand>
        <name>Zn(2+)</name>
        <dbReference type="ChEBI" id="CHEBI:29105"/>
    </ligand>
</feature>
<feature type="binding site" evidence="1">
    <location>
        <position position="266"/>
    </location>
    <ligand>
        <name>substrate</name>
    </ligand>
</feature>
<feature type="binding site" evidence="1">
    <location>
        <position position="266"/>
    </location>
    <ligand>
        <name>Zn(2+)</name>
        <dbReference type="ChEBI" id="CHEBI:29105"/>
    </ligand>
</feature>
<feature type="binding site" evidence="1">
    <location>
        <position position="333"/>
    </location>
    <ligand>
        <name>substrate</name>
    </ligand>
</feature>
<feature type="binding site" evidence="1">
    <location>
        <position position="366"/>
    </location>
    <ligand>
        <name>substrate</name>
    </ligand>
</feature>
<feature type="binding site" evidence="1">
    <location>
        <position position="366"/>
    </location>
    <ligand>
        <name>Zn(2+)</name>
        <dbReference type="ChEBI" id="CHEBI:29105"/>
    </ligand>
</feature>
<feature type="binding site" evidence="1">
    <location>
        <position position="420"/>
    </location>
    <ligand>
        <name>substrate</name>
    </ligand>
</feature>
<feature type="binding site" evidence="1">
    <location>
        <position position="425"/>
    </location>
    <ligand>
        <name>substrate</name>
    </ligand>
</feature>
<feature type="binding site" evidence="1">
    <location>
        <position position="425"/>
    </location>
    <ligand>
        <name>Zn(2+)</name>
        <dbReference type="ChEBI" id="CHEBI:29105"/>
    </ligand>
</feature>